<accession>B3CUJ6</accession>
<organism>
    <name type="scientific">Orientia tsutsugamushi (strain Ikeda)</name>
    <name type="common">Rickettsia tsutsugamushi</name>
    <dbReference type="NCBI Taxonomy" id="334380"/>
    <lineage>
        <taxon>Bacteria</taxon>
        <taxon>Pseudomonadati</taxon>
        <taxon>Pseudomonadota</taxon>
        <taxon>Alphaproteobacteria</taxon>
        <taxon>Rickettsiales</taxon>
        <taxon>Rickettsiaceae</taxon>
        <taxon>Rickettsieae</taxon>
        <taxon>Orientia</taxon>
    </lineage>
</organism>
<evidence type="ECO:0000255" key="1">
    <source>
        <dbReference type="HAMAP-Rule" id="MF_00445"/>
    </source>
</evidence>
<gene>
    <name evidence="1" type="primary">nuoN</name>
    <name type="ordered locus">OTT_1585</name>
</gene>
<reference key="1">
    <citation type="journal article" date="2008" name="DNA Res.">
        <title>The whole-genome sequencing of the obligate intracellular bacterium Orientia tsutsugamushi revealed massive gene amplification during reductive genome evolution.</title>
        <authorList>
            <person name="Nakayama K."/>
            <person name="Yamashita A."/>
            <person name="Kurokawa K."/>
            <person name="Morimoto T."/>
            <person name="Ogawa M."/>
            <person name="Fukuhara M."/>
            <person name="Urakami H."/>
            <person name="Ohnishi M."/>
            <person name="Uchiyama I."/>
            <person name="Ogura Y."/>
            <person name="Ooka T."/>
            <person name="Oshima K."/>
            <person name="Tamura A."/>
            <person name="Hattori M."/>
            <person name="Hayashi T."/>
        </authorList>
    </citation>
    <scope>NUCLEOTIDE SEQUENCE [LARGE SCALE GENOMIC DNA]</scope>
    <source>
        <strain>Ikeda</strain>
    </source>
</reference>
<sequence>MEMLYGIMPEISLLLSALIFQLIGAYSNNTLTHVIAKMAIGFAAILIAILVFHPSWFNGIYWNNTFIVNQSKIYLKIIILIFYIFLTLIYSGYIKVANLKGHSEYIVLMQLGALGGLILVSANDFMVMYLGIEMQGIIGYILTTFNYNNSRSSEAGLKYFILGTVFSAIMLFGISLVYGTTQSIRYDIALHALQNPSSDMAVLVAAILMILVGVLFKLSIAPFHMWTPDIYDGAPLVVVALFSSLPKISVLALLGNLLSELKFASDAFFYIKTIIMVLACLSLIVGAFGALLQQSIQRFIAYSAILNLGYAVLALVANSSNVIRAEISYFYIIIYAASMLGFIAIIINNFTNRANYLKISHLSGLSNVKKLSSILIAIQMFSLVGIPPFAGFISKYIIFTSILKSGMYELIIMGIAAVVIGSYCYLNIVKVMYFLPATVRFQNSSVNFELSLVSIASTIIVISLMIICMLFGEGLNVIV</sequence>
<feature type="chain" id="PRO_0000391195" description="NADH-quinone oxidoreductase subunit N">
    <location>
        <begin position="1"/>
        <end position="479"/>
    </location>
</feature>
<feature type="transmembrane region" description="Helical" evidence="1">
    <location>
        <begin position="3"/>
        <end position="23"/>
    </location>
</feature>
<feature type="transmembrane region" description="Helical" evidence="1">
    <location>
        <begin position="40"/>
        <end position="60"/>
    </location>
</feature>
<feature type="transmembrane region" description="Helical" evidence="1">
    <location>
        <begin position="77"/>
        <end position="97"/>
    </location>
</feature>
<feature type="transmembrane region" description="Helical" evidence="1">
    <location>
        <begin position="102"/>
        <end position="122"/>
    </location>
</feature>
<feature type="transmembrane region" description="Helical" evidence="1">
    <location>
        <begin position="125"/>
        <end position="145"/>
    </location>
</feature>
<feature type="transmembrane region" description="Helical" evidence="1">
    <location>
        <begin position="159"/>
        <end position="179"/>
    </location>
</feature>
<feature type="transmembrane region" description="Helical" evidence="1">
    <location>
        <begin position="200"/>
        <end position="220"/>
    </location>
</feature>
<feature type="transmembrane region" description="Helical" evidence="1">
    <location>
        <begin position="234"/>
        <end position="254"/>
    </location>
</feature>
<feature type="transmembrane region" description="Helical" evidence="1">
    <location>
        <begin position="268"/>
        <end position="288"/>
    </location>
</feature>
<feature type="transmembrane region" description="Helical" evidence="1">
    <location>
        <begin position="299"/>
        <end position="319"/>
    </location>
</feature>
<feature type="transmembrane region" description="Helical" evidence="1">
    <location>
        <begin position="327"/>
        <end position="347"/>
    </location>
</feature>
<feature type="transmembrane region" description="Helical" evidence="1">
    <location>
        <begin position="373"/>
        <end position="393"/>
    </location>
</feature>
<feature type="transmembrane region" description="Helical" evidence="1">
    <location>
        <begin position="409"/>
        <end position="429"/>
    </location>
</feature>
<feature type="transmembrane region" description="Helical" evidence="1">
    <location>
        <begin position="452"/>
        <end position="472"/>
    </location>
</feature>
<proteinExistence type="inferred from homology"/>
<name>NUON_ORITI</name>
<keyword id="KW-0997">Cell inner membrane</keyword>
<keyword id="KW-1003">Cell membrane</keyword>
<keyword id="KW-0472">Membrane</keyword>
<keyword id="KW-0520">NAD</keyword>
<keyword id="KW-0874">Quinone</keyword>
<keyword id="KW-1278">Translocase</keyword>
<keyword id="KW-0812">Transmembrane</keyword>
<keyword id="KW-1133">Transmembrane helix</keyword>
<keyword id="KW-0813">Transport</keyword>
<keyword id="KW-0830">Ubiquinone</keyword>
<dbReference type="EC" id="7.1.1.-" evidence="1"/>
<dbReference type="EMBL" id="AP008981">
    <property type="protein sequence ID" value="BAG41043.1"/>
    <property type="molecule type" value="Genomic_DNA"/>
</dbReference>
<dbReference type="RefSeq" id="WP_012462045.1">
    <property type="nucleotide sequence ID" value="NC_010793.1"/>
</dbReference>
<dbReference type="SMR" id="B3CUJ6"/>
<dbReference type="KEGG" id="ott:OTT_1585"/>
<dbReference type="HOGENOM" id="CLU_007100_1_3_5"/>
<dbReference type="OrthoDB" id="9811718at2"/>
<dbReference type="Proteomes" id="UP000001033">
    <property type="component" value="Chromosome"/>
</dbReference>
<dbReference type="GO" id="GO:0005886">
    <property type="term" value="C:plasma membrane"/>
    <property type="evidence" value="ECO:0007669"/>
    <property type="project" value="UniProtKB-SubCell"/>
</dbReference>
<dbReference type="GO" id="GO:0008137">
    <property type="term" value="F:NADH dehydrogenase (ubiquinone) activity"/>
    <property type="evidence" value="ECO:0007669"/>
    <property type="project" value="InterPro"/>
</dbReference>
<dbReference type="GO" id="GO:0050136">
    <property type="term" value="F:NADH:ubiquinone reductase (non-electrogenic) activity"/>
    <property type="evidence" value="ECO:0007669"/>
    <property type="project" value="UniProtKB-UniRule"/>
</dbReference>
<dbReference type="GO" id="GO:0048038">
    <property type="term" value="F:quinone binding"/>
    <property type="evidence" value="ECO:0007669"/>
    <property type="project" value="UniProtKB-KW"/>
</dbReference>
<dbReference type="GO" id="GO:0042773">
    <property type="term" value="P:ATP synthesis coupled electron transport"/>
    <property type="evidence" value="ECO:0007669"/>
    <property type="project" value="InterPro"/>
</dbReference>
<dbReference type="HAMAP" id="MF_00445">
    <property type="entry name" value="NDH1_NuoN_1"/>
    <property type="match status" value="1"/>
</dbReference>
<dbReference type="InterPro" id="IPR010096">
    <property type="entry name" value="NADH-Q_OxRdtase_suN/2"/>
</dbReference>
<dbReference type="InterPro" id="IPR001750">
    <property type="entry name" value="ND/Mrp_TM"/>
</dbReference>
<dbReference type="NCBIfam" id="TIGR01770">
    <property type="entry name" value="NDH_I_N"/>
    <property type="match status" value="1"/>
</dbReference>
<dbReference type="PANTHER" id="PTHR22773">
    <property type="entry name" value="NADH DEHYDROGENASE"/>
    <property type="match status" value="1"/>
</dbReference>
<dbReference type="Pfam" id="PF00361">
    <property type="entry name" value="Proton_antipo_M"/>
    <property type="match status" value="1"/>
</dbReference>
<protein>
    <recommendedName>
        <fullName evidence="1">NADH-quinone oxidoreductase subunit N</fullName>
        <ecNumber evidence="1">7.1.1.-</ecNumber>
    </recommendedName>
    <alternativeName>
        <fullName evidence="1">NADH dehydrogenase I subunit N</fullName>
    </alternativeName>
    <alternativeName>
        <fullName evidence="1">NDH-1 subunit N</fullName>
    </alternativeName>
</protein>
<comment type="function">
    <text evidence="1">NDH-1 shuttles electrons from NADH, via FMN and iron-sulfur (Fe-S) centers, to quinones in the respiratory chain. The immediate electron acceptor for the enzyme in this species is believed to be ubiquinone. Couples the redox reaction to proton translocation (for every two electrons transferred, four hydrogen ions are translocated across the cytoplasmic membrane), and thus conserves the redox energy in a proton gradient.</text>
</comment>
<comment type="catalytic activity">
    <reaction evidence="1">
        <text>a quinone + NADH + 5 H(+)(in) = a quinol + NAD(+) + 4 H(+)(out)</text>
        <dbReference type="Rhea" id="RHEA:57888"/>
        <dbReference type="ChEBI" id="CHEBI:15378"/>
        <dbReference type="ChEBI" id="CHEBI:24646"/>
        <dbReference type="ChEBI" id="CHEBI:57540"/>
        <dbReference type="ChEBI" id="CHEBI:57945"/>
        <dbReference type="ChEBI" id="CHEBI:132124"/>
    </reaction>
</comment>
<comment type="subunit">
    <text evidence="1">NDH-1 is composed of 14 different subunits. Subunits NuoA, H, J, K, L, M, N constitute the membrane sector of the complex.</text>
</comment>
<comment type="subcellular location">
    <subcellularLocation>
        <location evidence="1">Cell inner membrane</location>
        <topology evidence="1">Multi-pass membrane protein</topology>
    </subcellularLocation>
</comment>
<comment type="similarity">
    <text evidence="1">Belongs to the complex I subunit 2 family.</text>
</comment>